<dbReference type="EC" id="3.4.21.-"/>
<dbReference type="EMBL" id="AP009324">
    <property type="protein sequence ID" value="BAF78677.1"/>
    <property type="molecule type" value="Genomic_DNA"/>
</dbReference>
<dbReference type="RefSeq" id="WP_001038752.1">
    <property type="nucleotide sequence ID" value="NC_009782.1"/>
</dbReference>
<dbReference type="SMR" id="A7X3Q5"/>
<dbReference type="MEROPS" id="S01.526"/>
<dbReference type="KEGG" id="saw:SAHV_1794"/>
<dbReference type="HOGENOM" id="CLU_073589_2_0_9"/>
<dbReference type="GO" id="GO:0005576">
    <property type="term" value="C:extracellular region"/>
    <property type="evidence" value="ECO:0007669"/>
    <property type="project" value="UniProtKB-SubCell"/>
</dbReference>
<dbReference type="GO" id="GO:0008236">
    <property type="term" value="F:serine-type peptidase activity"/>
    <property type="evidence" value="ECO:0007669"/>
    <property type="project" value="UniProtKB-KW"/>
</dbReference>
<dbReference type="GO" id="GO:0006508">
    <property type="term" value="P:proteolysis"/>
    <property type="evidence" value="ECO:0007669"/>
    <property type="project" value="UniProtKB-KW"/>
</dbReference>
<dbReference type="Gene3D" id="2.40.10.10">
    <property type="entry name" value="Trypsin-like serine proteases"/>
    <property type="match status" value="2"/>
</dbReference>
<dbReference type="InterPro" id="IPR009003">
    <property type="entry name" value="Peptidase_S1_PA"/>
</dbReference>
<dbReference type="InterPro" id="IPR043504">
    <property type="entry name" value="Peptidase_S1_PA_chymotrypsin"/>
</dbReference>
<dbReference type="InterPro" id="IPR008256">
    <property type="entry name" value="Peptidase_S1B"/>
</dbReference>
<dbReference type="InterPro" id="IPR028301">
    <property type="entry name" value="V8_his_AS"/>
</dbReference>
<dbReference type="PANTHER" id="PTHR43019:SF23">
    <property type="entry name" value="PROTEASE DO-LIKE 5, CHLOROPLASTIC"/>
    <property type="match status" value="1"/>
</dbReference>
<dbReference type="PANTHER" id="PTHR43019">
    <property type="entry name" value="SERINE ENDOPROTEASE DEGS"/>
    <property type="match status" value="1"/>
</dbReference>
<dbReference type="Pfam" id="PF13365">
    <property type="entry name" value="Trypsin_2"/>
    <property type="match status" value="1"/>
</dbReference>
<dbReference type="PRINTS" id="PR00839">
    <property type="entry name" value="V8PROTEASE"/>
</dbReference>
<dbReference type="SUPFAM" id="SSF50494">
    <property type="entry name" value="Trypsin-like serine proteases"/>
    <property type="match status" value="1"/>
</dbReference>
<dbReference type="PROSITE" id="PS00672">
    <property type="entry name" value="V8_HIS"/>
    <property type="match status" value="1"/>
</dbReference>
<evidence type="ECO:0000250" key="1"/>
<evidence type="ECO:0000305" key="2"/>
<accession>A7X3Q5</accession>
<gene>
    <name type="primary">splF</name>
    <name type="ordered locus">SAHV_1794</name>
</gene>
<keyword id="KW-0378">Hydrolase</keyword>
<keyword id="KW-0645">Protease</keyword>
<keyword id="KW-0964">Secreted</keyword>
<keyword id="KW-0720">Serine protease</keyword>
<keyword id="KW-0732">Signal</keyword>
<protein>
    <recommendedName>
        <fullName>Serine protease SplF</fullName>
        <ecNumber>3.4.21.-</ecNumber>
    </recommendedName>
</protein>
<reference key="1">
    <citation type="journal article" date="2008" name="Antimicrob. Agents Chemother.">
        <title>Mutated response regulator graR is responsible for phenotypic conversion of Staphylococcus aureus from heterogeneous vancomycin-intermediate resistance to vancomycin-intermediate resistance.</title>
        <authorList>
            <person name="Neoh H.-M."/>
            <person name="Cui L."/>
            <person name="Yuzawa H."/>
            <person name="Takeuchi F."/>
            <person name="Matsuo M."/>
            <person name="Hiramatsu K."/>
        </authorList>
    </citation>
    <scope>NUCLEOTIDE SEQUENCE [LARGE SCALE GENOMIC DNA]</scope>
    <source>
        <strain>Mu3 / ATCC 700698</strain>
    </source>
</reference>
<comment type="subcellular location">
    <subcellularLocation>
        <location evidence="1">Secreted</location>
    </subcellularLocation>
</comment>
<comment type="similarity">
    <text evidence="2">Belongs to the peptidase S1B family.</text>
</comment>
<name>SPLF_STAA1</name>
<sequence length="239" mass="25641">MNKNIIIKSIAALTILTSVTGVGTTMVEGIQQTAKAENTVKQITNTNVAPYSGVTWMGAGTGFVVGNHTIITNKHVTYHMKVGDEIKAHPNGFYNNGGGLYKVTKIVDYPGKEDIAVVQVEEKSTQPKGRKFKDFTSKFNIASEAKENEPISVIGYPNPNGNKLQMYESTGKVLSVNGNIVSSDAIIQPGSSGSPILNSKHEAIGVIYAGNKPSGESTRGFAVYFSPEIKKFIADNLDK</sequence>
<proteinExistence type="inferred from homology"/>
<organism>
    <name type="scientific">Staphylococcus aureus (strain Mu3 / ATCC 700698)</name>
    <dbReference type="NCBI Taxonomy" id="418127"/>
    <lineage>
        <taxon>Bacteria</taxon>
        <taxon>Bacillati</taxon>
        <taxon>Bacillota</taxon>
        <taxon>Bacilli</taxon>
        <taxon>Bacillales</taxon>
        <taxon>Staphylococcaceae</taxon>
        <taxon>Staphylococcus</taxon>
    </lineage>
</organism>
<feature type="signal peptide" evidence="1">
    <location>
        <begin position="1"/>
        <end position="36"/>
    </location>
</feature>
<feature type="chain" id="PRO_0000359581" description="Serine protease SplF">
    <location>
        <begin position="37"/>
        <end position="239"/>
    </location>
</feature>
<feature type="active site" description="Charge relay system" evidence="1">
    <location>
        <position position="75"/>
    </location>
</feature>
<feature type="active site" description="Charge relay system" evidence="1">
    <location>
        <position position="114"/>
    </location>
</feature>
<feature type="active site" description="Charge relay system" evidence="1">
    <location>
        <position position="192"/>
    </location>
</feature>